<name>HIF1N_MOUSE</name>
<accession>Q8BLR9</accession>
<accession>A1L3B7</accession>
<accession>Q3U3G4</accession>
<dbReference type="EC" id="1.14.11.30"/>
<dbReference type="EC" id="1.14.11.n4"/>
<dbReference type="EMBL" id="AK043636">
    <property type="protein sequence ID" value="BAC31602.1"/>
    <property type="molecule type" value="mRNA"/>
</dbReference>
<dbReference type="EMBL" id="AK154774">
    <property type="protein sequence ID" value="BAE32822.1"/>
    <property type="molecule type" value="mRNA"/>
</dbReference>
<dbReference type="EMBL" id="BC130013">
    <property type="protein sequence ID" value="AAI30014.1"/>
    <property type="molecule type" value="mRNA"/>
</dbReference>
<dbReference type="CCDS" id="CCDS29852.1">
    <molecule id="Q8BLR9-1"/>
</dbReference>
<dbReference type="RefSeq" id="NP_795932.2">
    <molecule id="Q8BLR9-1"/>
    <property type="nucleotide sequence ID" value="NM_176958.3"/>
</dbReference>
<dbReference type="SMR" id="Q8BLR9"/>
<dbReference type="BioGRID" id="235386">
    <property type="interactions" value="3"/>
</dbReference>
<dbReference type="CORUM" id="Q8BLR9"/>
<dbReference type="FunCoup" id="Q8BLR9">
    <property type="interactions" value="3718"/>
</dbReference>
<dbReference type="IntAct" id="Q8BLR9">
    <property type="interactions" value="2"/>
</dbReference>
<dbReference type="STRING" id="10090.ENSMUSP00000035326"/>
<dbReference type="PhosphoSitePlus" id="Q8BLR9"/>
<dbReference type="jPOST" id="Q8BLR9"/>
<dbReference type="PaxDb" id="10090-ENSMUSP00000035326"/>
<dbReference type="PeptideAtlas" id="Q8BLR9"/>
<dbReference type="ProteomicsDB" id="273340">
    <molecule id="Q8BLR9-1"/>
</dbReference>
<dbReference type="ProteomicsDB" id="273341">
    <molecule id="Q8BLR9-2"/>
</dbReference>
<dbReference type="Pumba" id="Q8BLR9"/>
<dbReference type="Antibodypedia" id="17685">
    <property type="antibodies" value="636 antibodies from 36 providers"/>
</dbReference>
<dbReference type="DNASU" id="319594"/>
<dbReference type="Ensembl" id="ENSMUST00000040455.5">
    <molecule id="Q8BLR9-1"/>
    <property type="protein sequence ID" value="ENSMUSP00000035326.5"/>
    <property type="gene ID" value="ENSMUSG00000036450.5"/>
</dbReference>
<dbReference type="GeneID" id="319594"/>
<dbReference type="KEGG" id="mmu:319594"/>
<dbReference type="UCSC" id="uc008hpx.1">
    <molecule id="Q8BLR9-2"/>
    <property type="organism name" value="mouse"/>
</dbReference>
<dbReference type="UCSC" id="uc008hpy.1">
    <molecule id="Q8BLR9-1"/>
    <property type="organism name" value="mouse"/>
</dbReference>
<dbReference type="AGR" id="MGI:2442345"/>
<dbReference type="CTD" id="55662"/>
<dbReference type="MGI" id="MGI:2442345">
    <property type="gene designation" value="Hif1an"/>
</dbReference>
<dbReference type="VEuPathDB" id="HostDB:ENSMUSG00000036450"/>
<dbReference type="eggNOG" id="KOG2132">
    <property type="taxonomic scope" value="Eukaryota"/>
</dbReference>
<dbReference type="GeneTree" id="ENSGT00940000157409"/>
<dbReference type="HOGENOM" id="CLU_016785_3_0_1"/>
<dbReference type="InParanoid" id="Q8BLR9"/>
<dbReference type="OMA" id="QNIVGYE"/>
<dbReference type="OrthoDB" id="8832at9989"/>
<dbReference type="PhylomeDB" id="Q8BLR9"/>
<dbReference type="TreeFam" id="TF329609"/>
<dbReference type="Reactome" id="R-MMU-1234174">
    <property type="pathway name" value="Cellular response to hypoxia"/>
</dbReference>
<dbReference type="BioGRID-ORCS" id="319594">
    <property type="hits" value="11 hits in 82 CRISPR screens"/>
</dbReference>
<dbReference type="ChiTaRS" id="Hif1an">
    <property type="organism name" value="mouse"/>
</dbReference>
<dbReference type="PRO" id="PR:Q8BLR9"/>
<dbReference type="Proteomes" id="UP000000589">
    <property type="component" value="Chromosome 19"/>
</dbReference>
<dbReference type="RNAct" id="Q8BLR9">
    <property type="molecule type" value="protein"/>
</dbReference>
<dbReference type="Bgee" id="ENSMUSG00000036450">
    <property type="expression patterns" value="Expressed in hindlimb stylopod muscle and 220 other cell types or tissues"/>
</dbReference>
<dbReference type="GO" id="GO:0005737">
    <property type="term" value="C:cytoplasm"/>
    <property type="evidence" value="ECO:0000250"/>
    <property type="project" value="UniProtKB"/>
</dbReference>
<dbReference type="GO" id="GO:0005829">
    <property type="term" value="C:cytosol"/>
    <property type="evidence" value="ECO:0007669"/>
    <property type="project" value="Ensembl"/>
</dbReference>
<dbReference type="GO" id="GO:0005654">
    <property type="term" value="C:nucleoplasm"/>
    <property type="evidence" value="ECO:0007669"/>
    <property type="project" value="Ensembl"/>
</dbReference>
<dbReference type="GO" id="GO:0048471">
    <property type="term" value="C:perinuclear region of cytoplasm"/>
    <property type="evidence" value="ECO:0000250"/>
    <property type="project" value="UniProtKB"/>
</dbReference>
<dbReference type="GO" id="GO:0036140">
    <property type="term" value="F:[protein]-asparagine 3-dioxygenase activity"/>
    <property type="evidence" value="ECO:0000250"/>
    <property type="project" value="UniProtKB"/>
</dbReference>
<dbReference type="GO" id="GO:0071532">
    <property type="term" value="F:ankyrin repeat binding"/>
    <property type="evidence" value="ECO:0000250"/>
    <property type="project" value="UniProtKB"/>
</dbReference>
<dbReference type="GO" id="GO:0031406">
    <property type="term" value="F:carboxylic acid binding"/>
    <property type="evidence" value="ECO:0000250"/>
    <property type="project" value="UniProtKB"/>
</dbReference>
<dbReference type="GO" id="GO:0008198">
    <property type="term" value="F:ferrous iron binding"/>
    <property type="evidence" value="ECO:0000250"/>
    <property type="project" value="UniProtKB"/>
</dbReference>
<dbReference type="GO" id="GO:0051059">
    <property type="term" value="F:NF-kappaB binding"/>
    <property type="evidence" value="ECO:0000250"/>
    <property type="project" value="UniProtKB"/>
</dbReference>
<dbReference type="GO" id="GO:0005112">
    <property type="term" value="F:Notch binding"/>
    <property type="evidence" value="ECO:0000250"/>
    <property type="project" value="UniProtKB"/>
</dbReference>
<dbReference type="GO" id="GO:0062101">
    <property type="term" value="F:peptidyl-aspartic acid 3-dioxygenase activity"/>
    <property type="evidence" value="ECO:0000250"/>
    <property type="project" value="UniProtKB"/>
</dbReference>
<dbReference type="GO" id="GO:0036139">
    <property type="term" value="F:peptidyl-histidine dioxygenase activity"/>
    <property type="evidence" value="ECO:0000250"/>
    <property type="project" value="UniProtKB"/>
</dbReference>
<dbReference type="GO" id="GO:0042803">
    <property type="term" value="F:protein homodimerization activity"/>
    <property type="evidence" value="ECO:0000250"/>
    <property type="project" value="UniProtKB"/>
</dbReference>
<dbReference type="GO" id="GO:0003714">
    <property type="term" value="F:transcription corepressor activity"/>
    <property type="evidence" value="ECO:0000250"/>
    <property type="project" value="UniProtKB"/>
</dbReference>
<dbReference type="GO" id="GO:0008270">
    <property type="term" value="F:zinc ion binding"/>
    <property type="evidence" value="ECO:0000250"/>
    <property type="project" value="UniProtKB"/>
</dbReference>
<dbReference type="GO" id="GO:0045746">
    <property type="term" value="P:negative regulation of Notch signaling pathway"/>
    <property type="evidence" value="ECO:0000250"/>
    <property type="project" value="UniProtKB"/>
</dbReference>
<dbReference type="GO" id="GO:0045663">
    <property type="term" value="P:positive regulation of myoblast differentiation"/>
    <property type="evidence" value="ECO:0007669"/>
    <property type="project" value="Ensembl"/>
</dbReference>
<dbReference type="FunFam" id="1.10.287.1010:FF:000001">
    <property type="entry name" value="Hypoxia-inducible factor 1-alpha inhibitor"/>
    <property type="match status" value="1"/>
</dbReference>
<dbReference type="FunFam" id="2.60.120.10:FF:000042">
    <property type="entry name" value="Hypoxia-inducible factor 1-alpha inhibitor"/>
    <property type="match status" value="1"/>
</dbReference>
<dbReference type="Gene3D" id="1.10.287.1010">
    <property type="entry name" value="Clavaminate synthase-like"/>
    <property type="match status" value="1"/>
</dbReference>
<dbReference type="Gene3D" id="2.60.120.10">
    <property type="entry name" value="Jelly Rolls"/>
    <property type="match status" value="1"/>
</dbReference>
<dbReference type="InterPro" id="IPR041667">
    <property type="entry name" value="Cupin_8"/>
</dbReference>
<dbReference type="InterPro" id="IPR027452">
    <property type="entry name" value="FIH-1_dom_II"/>
</dbReference>
<dbReference type="InterPro" id="IPR003347">
    <property type="entry name" value="JmjC_dom"/>
</dbReference>
<dbReference type="InterPro" id="IPR014710">
    <property type="entry name" value="RmlC-like_jellyroll"/>
</dbReference>
<dbReference type="PANTHER" id="PTHR12461">
    <property type="entry name" value="HYPOXIA-INDUCIBLE FACTOR 1 ALPHA INHIBITOR-RELATED"/>
    <property type="match status" value="1"/>
</dbReference>
<dbReference type="PANTHER" id="PTHR12461:SF105">
    <property type="entry name" value="HYPOXIA-INDUCIBLE FACTOR 1-ALPHA INHIBITOR"/>
    <property type="match status" value="1"/>
</dbReference>
<dbReference type="Pfam" id="PF13621">
    <property type="entry name" value="Cupin_8"/>
    <property type="match status" value="1"/>
</dbReference>
<dbReference type="SMART" id="SM00558">
    <property type="entry name" value="JmjC"/>
    <property type="match status" value="1"/>
</dbReference>
<dbReference type="SUPFAM" id="SSF51197">
    <property type="entry name" value="Clavaminate synthase-like"/>
    <property type="match status" value="1"/>
</dbReference>
<dbReference type="PROSITE" id="PS51184">
    <property type="entry name" value="JMJC"/>
    <property type="match status" value="1"/>
</dbReference>
<gene>
    <name type="primary">Hif1an</name>
</gene>
<sequence length="349" mass="40241">MAATAAEVAASGSGEAREEAEAPGPAWDESQLRSYSFPTRPIPRLSQSDPRAEELIENEEPVVLTDTNLVYPALKWDLEYLQENIGNGDFSVYSASTHKFLYYDEKKMGNFQNFKPRSNREEIKFHEFVEKLQAIQQRGGEERLYLQQTLNDTVGRKIVMDFLGFNWNWINKQQGKRGWGQLTSNLLLIGMEGNVTPAHYDEQQNFFAQIKGHKRCILFPPDQFECLYPYPVHHPCDRQSQVDFDNPDYERFPNFRNVVGYETVVGPGDVLYIPMYWWHHIESLLNGGITITVNFWYKGAPTPKRIEYPLKAHQKVAIMRNIEKMLGEALGNPQEVGPLLNTMIKGRYN</sequence>
<protein>
    <recommendedName>
        <fullName>Hypoxia-inducible factor 1-alpha inhibitor</fullName>
        <ecNumber>1.14.11.30</ecNumber>
        <ecNumber>1.14.11.n4</ecNumber>
    </recommendedName>
    <alternativeName>
        <fullName>Hypoxia-inducible factor asparagine hydroxylase</fullName>
    </alternativeName>
</protein>
<feature type="initiator methionine" description="Removed" evidence="2">
    <location>
        <position position="1"/>
    </location>
</feature>
<feature type="chain" id="PRO_0000083975" description="Hypoxia-inducible factor 1-alpha inhibitor">
    <location>
        <begin position="2"/>
        <end position="349"/>
    </location>
</feature>
<feature type="domain" description="JmjC" evidence="3">
    <location>
        <begin position="142"/>
        <end position="307"/>
    </location>
</feature>
<feature type="region of interest" description="Disordered" evidence="4">
    <location>
        <begin position="1"/>
        <end position="51"/>
    </location>
</feature>
<feature type="region of interest" description="Interaction with VHL" evidence="1">
    <location>
        <begin position="2"/>
        <end position="125"/>
    </location>
</feature>
<feature type="compositionally biased region" description="Low complexity" evidence="4">
    <location>
        <begin position="1"/>
        <end position="14"/>
    </location>
</feature>
<feature type="binding site" evidence="2">
    <location>
        <position position="145"/>
    </location>
    <ligand>
        <name>2-oxoglutarate</name>
        <dbReference type="ChEBI" id="CHEBI:16810"/>
    </ligand>
</feature>
<feature type="binding site" evidence="2">
    <location>
        <position position="152"/>
    </location>
    <ligand>
        <name>substrate</name>
    </ligand>
</feature>
<feature type="binding site" evidence="1">
    <location>
        <begin position="181"/>
        <end position="183"/>
    </location>
    <ligand>
        <name>substrate</name>
    </ligand>
</feature>
<feature type="binding site" evidence="2">
    <location>
        <position position="196"/>
    </location>
    <ligand>
        <name>2-oxoglutarate</name>
        <dbReference type="ChEBI" id="CHEBI:16810"/>
    </ligand>
</feature>
<feature type="binding site" evidence="2">
    <location>
        <position position="199"/>
    </location>
    <ligand>
        <name>Fe cation</name>
        <dbReference type="ChEBI" id="CHEBI:24875"/>
        <note>catalytic</note>
    </ligand>
</feature>
<feature type="binding site" evidence="1">
    <location>
        <begin position="201"/>
        <end position="203"/>
    </location>
    <ligand>
        <name>substrate</name>
    </ligand>
</feature>
<feature type="binding site" evidence="2">
    <location>
        <position position="201"/>
    </location>
    <ligand>
        <name>Fe cation</name>
        <dbReference type="ChEBI" id="CHEBI:24875"/>
        <note>catalytic</note>
    </ligand>
</feature>
<feature type="binding site" evidence="2">
    <location>
        <position position="205"/>
    </location>
    <ligand>
        <name>2-oxoglutarate</name>
        <dbReference type="ChEBI" id="CHEBI:16810"/>
    </ligand>
</feature>
<feature type="binding site" evidence="2">
    <location>
        <position position="214"/>
    </location>
    <ligand>
        <name>2-oxoglutarate</name>
        <dbReference type="ChEBI" id="CHEBI:16810"/>
    </ligand>
</feature>
<feature type="binding site" evidence="1">
    <location>
        <begin position="238"/>
        <end position="239"/>
    </location>
    <ligand>
        <name>substrate</name>
    </ligand>
</feature>
<feature type="binding site" evidence="2">
    <location>
        <position position="279"/>
    </location>
    <ligand>
        <name>Fe cation</name>
        <dbReference type="ChEBI" id="CHEBI:24875"/>
        <note>catalytic</note>
    </ligand>
</feature>
<feature type="binding site" evidence="2">
    <location>
        <position position="294"/>
    </location>
    <ligand>
        <name>2-oxoglutarate</name>
        <dbReference type="ChEBI" id="CHEBI:16810"/>
    </ligand>
</feature>
<feature type="binding site" evidence="2">
    <location>
        <position position="300"/>
    </location>
    <ligand>
        <name>substrate</name>
    </ligand>
</feature>
<feature type="binding site" evidence="2">
    <location>
        <position position="321"/>
    </location>
    <ligand>
        <name>substrate</name>
    </ligand>
</feature>
<feature type="site" description="Important for dimer formation" evidence="2">
    <location>
        <position position="340"/>
    </location>
</feature>
<feature type="modified residue" description="N-acetylalanine" evidence="2">
    <location>
        <position position="2"/>
    </location>
</feature>
<feature type="splice variant" id="VSP_017537" description="In isoform 2." evidence="7">
    <original>QVDFDNPDYERFPNFRNVVGYET</original>
    <variation>GVKRRDQAKRETIAKEKYTKQNK</variation>
    <location>
        <begin position="241"/>
        <end position="263"/>
    </location>
</feature>
<feature type="splice variant" id="VSP_017538" description="In isoform 2." evidence="7">
    <location>
        <begin position="264"/>
        <end position="349"/>
    </location>
</feature>
<feature type="sequence conflict" description="In Ref. 2; AAI30014." evidence="8" ref="2">
    <original>R</original>
    <variation>L</variation>
    <location>
        <position position="177"/>
    </location>
</feature>
<reference key="1">
    <citation type="journal article" date="2005" name="Science">
        <title>The transcriptional landscape of the mammalian genome.</title>
        <authorList>
            <person name="Carninci P."/>
            <person name="Kasukawa T."/>
            <person name="Katayama S."/>
            <person name="Gough J."/>
            <person name="Frith M.C."/>
            <person name="Maeda N."/>
            <person name="Oyama R."/>
            <person name="Ravasi T."/>
            <person name="Lenhard B."/>
            <person name="Wells C."/>
            <person name="Kodzius R."/>
            <person name="Shimokawa K."/>
            <person name="Bajic V.B."/>
            <person name="Brenner S.E."/>
            <person name="Batalov S."/>
            <person name="Forrest A.R."/>
            <person name="Zavolan M."/>
            <person name="Davis M.J."/>
            <person name="Wilming L.G."/>
            <person name="Aidinis V."/>
            <person name="Allen J.E."/>
            <person name="Ambesi-Impiombato A."/>
            <person name="Apweiler R."/>
            <person name="Aturaliya R.N."/>
            <person name="Bailey T.L."/>
            <person name="Bansal M."/>
            <person name="Baxter L."/>
            <person name="Beisel K.W."/>
            <person name="Bersano T."/>
            <person name="Bono H."/>
            <person name="Chalk A.M."/>
            <person name="Chiu K.P."/>
            <person name="Choudhary V."/>
            <person name="Christoffels A."/>
            <person name="Clutterbuck D.R."/>
            <person name="Crowe M.L."/>
            <person name="Dalla E."/>
            <person name="Dalrymple B.P."/>
            <person name="de Bono B."/>
            <person name="Della Gatta G."/>
            <person name="di Bernardo D."/>
            <person name="Down T."/>
            <person name="Engstrom P."/>
            <person name="Fagiolini M."/>
            <person name="Faulkner G."/>
            <person name="Fletcher C.F."/>
            <person name="Fukushima T."/>
            <person name="Furuno M."/>
            <person name="Futaki S."/>
            <person name="Gariboldi M."/>
            <person name="Georgii-Hemming P."/>
            <person name="Gingeras T.R."/>
            <person name="Gojobori T."/>
            <person name="Green R.E."/>
            <person name="Gustincich S."/>
            <person name="Harbers M."/>
            <person name="Hayashi Y."/>
            <person name="Hensch T.K."/>
            <person name="Hirokawa N."/>
            <person name="Hill D."/>
            <person name="Huminiecki L."/>
            <person name="Iacono M."/>
            <person name="Ikeo K."/>
            <person name="Iwama A."/>
            <person name="Ishikawa T."/>
            <person name="Jakt M."/>
            <person name="Kanapin A."/>
            <person name="Katoh M."/>
            <person name="Kawasawa Y."/>
            <person name="Kelso J."/>
            <person name="Kitamura H."/>
            <person name="Kitano H."/>
            <person name="Kollias G."/>
            <person name="Krishnan S.P."/>
            <person name="Kruger A."/>
            <person name="Kummerfeld S.K."/>
            <person name="Kurochkin I.V."/>
            <person name="Lareau L.F."/>
            <person name="Lazarevic D."/>
            <person name="Lipovich L."/>
            <person name="Liu J."/>
            <person name="Liuni S."/>
            <person name="McWilliam S."/>
            <person name="Madan Babu M."/>
            <person name="Madera M."/>
            <person name="Marchionni L."/>
            <person name="Matsuda H."/>
            <person name="Matsuzawa S."/>
            <person name="Miki H."/>
            <person name="Mignone F."/>
            <person name="Miyake S."/>
            <person name="Morris K."/>
            <person name="Mottagui-Tabar S."/>
            <person name="Mulder N."/>
            <person name="Nakano N."/>
            <person name="Nakauchi H."/>
            <person name="Ng P."/>
            <person name="Nilsson R."/>
            <person name="Nishiguchi S."/>
            <person name="Nishikawa S."/>
            <person name="Nori F."/>
            <person name="Ohara O."/>
            <person name="Okazaki Y."/>
            <person name="Orlando V."/>
            <person name="Pang K.C."/>
            <person name="Pavan W.J."/>
            <person name="Pavesi G."/>
            <person name="Pesole G."/>
            <person name="Petrovsky N."/>
            <person name="Piazza S."/>
            <person name="Reed J."/>
            <person name="Reid J.F."/>
            <person name="Ring B.Z."/>
            <person name="Ringwald M."/>
            <person name="Rost B."/>
            <person name="Ruan Y."/>
            <person name="Salzberg S.L."/>
            <person name="Sandelin A."/>
            <person name="Schneider C."/>
            <person name="Schoenbach C."/>
            <person name="Sekiguchi K."/>
            <person name="Semple C.A."/>
            <person name="Seno S."/>
            <person name="Sessa L."/>
            <person name="Sheng Y."/>
            <person name="Shibata Y."/>
            <person name="Shimada H."/>
            <person name="Shimada K."/>
            <person name="Silva D."/>
            <person name="Sinclair B."/>
            <person name="Sperling S."/>
            <person name="Stupka E."/>
            <person name="Sugiura K."/>
            <person name="Sultana R."/>
            <person name="Takenaka Y."/>
            <person name="Taki K."/>
            <person name="Tammoja K."/>
            <person name="Tan S.L."/>
            <person name="Tang S."/>
            <person name="Taylor M.S."/>
            <person name="Tegner J."/>
            <person name="Teichmann S.A."/>
            <person name="Ueda H.R."/>
            <person name="van Nimwegen E."/>
            <person name="Verardo R."/>
            <person name="Wei C.L."/>
            <person name="Yagi K."/>
            <person name="Yamanishi H."/>
            <person name="Zabarovsky E."/>
            <person name="Zhu S."/>
            <person name="Zimmer A."/>
            <person name="Hide W."/>
            <person name="Bult C."/>
            <person name="Grimmond S.M."/>
            <person name="Teasdale R.D."/>
            <person name="Liu E.T."/>
            <person name="Brusic V."/>
            <person name="Quackenbush J."/>
            <person name="Wahlestedt C."/>
            <person name="Mattick J.S."/>
            <person name="Hume D.A."/>
            <person name="Kai C."/>
            <person name="Sasaki D."/>
            <person name="Tomaru Y."/>
            <person name="Fukuda S."/>
            <person name="Kanamori-Katayama M."/>
            <person name="Suzuki M."/>
            <person name="Aoki J."/>
            <person name="Arakawa T."/>
            <person name="Iida J."/>
            <person name="Imamura K."/>
            <person name="Itoh M."/>
            <person name="Kato T."/>
            <person name="Kawaji H."/>
            <person name="Kawagashira N."/>
            <person name="Kawashima T."/>
            <person name="Kojima M."/>
            <person name="Kondo S."/>
            <person name="Konno H."/>
            <person name="Nakano K."/>
            <person name="Ninomiya N."/>
            <person name="Nishio T."/>
            <person name="Okada M."/>
            <person name="Plessy C."/>
            <person name="Shibata K."/>
            <person name="Shiraki T."/>
            <person name="Suzuki S."/>
            <person name="Tagami M."/>
            <person name="Waki K."/>
            <person name="Watahiki A."/>
            <person name="Okamura-Oho Y."/>
            <person name="Suzuki H."/>
            <person name="Kawai J."/>
            <person name="Hayashizaki Y."/>
        </authorList>
    </citation>
    <scope>NUCLEOTIDE SEQUENCE [LARGE SCALE MRNA] (ISOFORMS 1 AND 2)</scope>
    <source>
        <strain>C57BL/6J</strain>
        <strain>NOD</strain>
        <tissue>Brain cortex</tissue>
    </source>
</reference>
<reference key="2">
    <citation type="journal article" date="2004" name="Genome Res.">
        <title>The status, quality, and expansion of the NIH full-length cDNA project: the Mammalian Gene Collection (MGC).</title>
        <authorList>
            <consortium name="The MGC Project Team"/>
        </authorList>
    </citation>
    <scope>NUCLEOTIDE SEQUENCE [LARGE SCALE MRNA] (ISOFORM 1)</scope>
</reference>
<reference key="3">
    <citation type="journal article" date="2007" name="Mol. Cell. Biol.">
        <title>ASB4 is a hydroxylation substrate of FIH and promotes vascular differentiation via an oxygen-dependent mechanism.</title>
        <authorList>
            <person name="Ferguson J.E. III"/>
            <person name="Wu Y."/>
            <person name="Smith K."/>
            <person name="Charles P."/>
            <person name="Powers K."/>
            <person name="Wang H."/>
            <person name="Patterson C."/>
        </authorList>
    </citation>
    <scope>FUNCTION</scope>
    <scope>INTERACTION WITH ASB4</scope>
</reference>
<reference key="4">
    <citation type="journal article" date="2010" name="Cell">
        <title>A tissue-specific atlas of mouse protein phosphorylation and expression.</title>
        <authorList>
            <person name="Huttlin E.L."/>
            <person name="Jedrychowski M.P."/>
            <person name="Elias J.E."/>
            <person name="Goswami T."/>
            <person name="Rad R."/>
            <person name="Beausoleil S.A."/>
            <person name="Villen J."/>
            <person name="Haas W."/>
            <person name="Sowa M.E."/>
            <person name="Gygi S.P."/>
        </authorList>
    </citation>
    <scope>IDENTIFICATION BY MASS SPECTROMETRY [LARGE SCALE ANALYSIS]</scope>
    <source>
        <tissue>Spleen</tissue>
        <tissue>Testis</tissue>
    </source>
</reference>
<reference key="5">
    <citation type="journal article" date="2015" name="Kidney Int.">
        <title>Anks3 interacts with nephronophthisis proteins and is required for normal renal development.</title>
        <authorList>
            <person name="Yakulov T.A."/>
            <person name="Yasunaga T."/>
            <person name="Ramachandran H."/>
            <person name="Engel C."/>
            <person name="Mueller B."/>
            <person name="Hoff S."/>
            <person name="Dengjel J."/>
            <person name="Lienkamp S.S."/>
            <person name="Walz G."/>
        </authorList>
    </citation>
    <scope>INTERACTION WITH ANKS3</scope>
</reference>
<evidence type="ECO:0000250" key="1"/>
<evidence type="ECO:0000250" key="2">
    <source>
        <dbReference type="UniProtKB" id="Q9NWT6"/>
    </source>
</evidence>
<evidence type="ECO:0000255" key="3">
    <source>
        <dbReference type="PROSITE-ProRule" id="PRU00538"/>
    </source>
</evidence>
<evidence type="ECO:0000256" key="4">
    <source>
        <dbReference type="SAM" id="MobiDB-lite"/>
    </source>
</evidence>
<evidence type="ECO:0000269" key="5">
    <source>
    </source>
</evidence>
<evidence type="ECO:0000269" key="6">
    <source>
    </source>
</evidence>
<evidence type="ECO:0000303" key="7">
    <source>
    </source>
</evidence>
<evidence type="ECO:0000305" key="8"/>
<organism>
    <name type="scientific">Mus musculus</name>
    <name type="common">Mouse</name>
    <dbReference type="NCBI Taxonomy" id="10090"/>
    <lineage>
        <taxon>Eukaryota</taxon>
        <taxon>Metazoa</taxon>
        <taxon>Chordata</taxon>
        <taxon>Craniata</taxon>
        <taxon>Vertebrata</taxon>
        <taxon>Euteleostomi</taxon>
        <taxon>Mammalia</taxon>
        <taxon>Eutheria</taxon>
        <taxon>Euarchontoglires</taxon>
        <taxon>Glires</taxon>
        <taxon>Rodentia</taxon>
        <taxon>Myomorpha</taxon>
        <taxon>Muroidea</taxon>
        <taxon>Muridae</taxon>
        <taxon>Murinae</taxon>
        <taxon>Mus</taxon>
        <taxon>Mus</taxon>
    </lineage>
</organism>
<keyword id="KW-0007">Acetylation</keyword>
<keyword id="KW-0025">Alternative splicing</keyword>
<keyword id="KW-0963">Cytoplasm</keyword>
<keyword id="KW-0223">Dioxygenase</keyword>
<keyword id="KW-0408">Iron</keyword>
<keyword id="KW-0479">Metal-binding</keyword>
<keyword id="KW-0539">Nucleus</keyword>
<keyword id="KW-0560">Oxidoreductase</keyword>
<keyword id="KW-1185">Reference proteome</keyword>
<keyword id="KW-0804">Transcription</keyword>
<keyword id="KW-0805">Transcription regulation</keyword>
<comment type="function">
    <text evidence="2 5">Hydroxylates HIF-1 alpha at 'Asn-799' in the C-terminal transactivation domain (CAD). Functions as an oxygen sensor and, under normoxic conditions, the hydroxylation prevents interaction of HIF-1 with transcriptional coactivators including Cbp/p300-interacting transactivator. Involved in transcriptional repression through interaction with HIF1A, VHL and histone deacetylases. Hydroxylates specific Asn residues within ankyrin repeat domains (ARD) of NFKB1, NFKBIA, NOTCH1, ASB4, PPP1R12A and several other ARD-containing proteins. Also hydroxylates Asp and His residues within ARDs of ANK1 and TNKS2, respectively. Negatively regulates NOTCH1 activity, accelerating myogenic differentiation (By similarity). Positively regulates ASB4 activity, promoting vascular differentiation.</text>
</comment>
<comment type="catalytic activity">
    <reaction>
        <text>L-asparaginyl-[hypoxia-inducible factor alpha subunit] + 2-oxoglutarate + O2 = (3S)-3-hydroxy-L-asparaginyl-[hypoxia-inducible factor alpha subunit] + succinate + CO2</text>
        <dbReference type="Rhea" id="RHEA:54268"/>
        <dbReference type="Rhea" id="RHEA-COMP:13833"/>
        <dbReference type="Rhea" id="RHEA-COMP:13834"/>
        <dbReference type="ChEBI" id="CHEBI:15379"/>
        <dbReference type="ChEBI" id="CHEBI:16526"/>
        <dbReference type="ChEBI" id="CHEBI:16810"/>
        <dbReference type="ChEBI" id="CHEBI:30031"/>
        <dbReference type="ChEBI" id="CHEBI:50347"/>
        <dbReference type="ChEBI" id="CHEBI:138107"/>
        <dbReference type="EC" id="1.14.11.30"/>
    </reaction>
</comment>
<comment type="catalytic activity">
    <reaction>
        <text>L-histidyl-[ankyrin-repeat domain protein] + 2-oxoglutarate + O2 = (3S)-3-hydroxy-L-histidyl-[ankyrin-repeat domain protein] + succinate + CO2</text>
        <dbReference type="Rhea" id="RHEA:54264"/>
        <dbReference type="Rhea" id="RHEA-COMP:13836"/>
        <dbReference type="Rhea" id="RHEA-COMP:13837"/>
        <dbReference type="ChEBI" id="CHEBI:15379"/>
        <dbReference type="ChEBI" id="CHEBI:16526"/>
        <dbReference type="ChEBI" id="CHEBI:16810"/>
        <dbReference type="ChEBI" id="CHEBI:29979"/>
        <dbReference type="ChEBI" id="CHEBI:30031"/>
        <dbReference type="ChEBI" id="CHEBI:138021"/>
        <dbReference type="EC" id="1.14.11.n4"/>
    </reaction>
</comment>
<comment type="catalytic activity">
    <reaction>
        <text>L-asparaginyl-[ankyrin-repeat domain protein] + 2-oxoglutarate + O2 = (3S)-3-hydroxy-L-asparaginyl-[ankyrin-repeat domain protein] + succinate + CO2</text>
        <dbReference type="Rhea" id="RHEA:54272"/>
        <dbReference type="Rhea" id="RHEA-COMP:13838"/>
        <dbReference type="Rhea" id="RHEA-COMP:13839"/>
        <dbReference type="ChEBI" id="CHEBI:15379"/>
        <dbReference type="ChEBI" id="CHEBI:16526"/>
        <dbReference type="ChEBI" id="CHEBI:16810"/>
        <dbReference type="ChEBI" id="CHEBI:30031"/>
        <dbReference type="ChEBI" id="CHEBI:50347"/>
        <dbReference type="ChEBI" id="CHEBI:138107"/>
        <dbReference type="EC" id="1.14.11.n4"/>
    </reaction>
</comment>
<comment type="catalytic activity">
    <reaction>
        <text>L-aspartyl-[ankyrin-repeat domain protein] + 2-oxoglutarate + O2 = (3S)-3-hydroxy-L-aspartyl-[ankyrin-repeat domain protein] + succinate + CO2</text>
        <dbReference type="Rhea" id="RHEA:54280"/>
        <dbReference type="Rhea" id="RHEA-COMP:13843"/>
        <dbReference type="Rhea" id="RHEA-COMP:13844"/>
        <dbReference type="ChEBI" id="CHEBI:15379"/>
        <dbReference type="ChEBI" id="CHEBI:16526"/>
        <dbReference type="ChEBI" id="CHEBI:16810"/>
        <dbReference type="ChEBI" id="CHEBI:29961"/>
        <dbReference type="ChEBI" id="CHEBI:30031"/>
        <dbReference type="ChEBI" id="CHEBI:138111"/>
        <dbReference type="EC" id="1.14.11.n4"/>
    </reaction>
</comment>
<comment type="cofactor">
    <cofactor evidence="2">
        <name>Fe(2+)</name>
        <dbReference type="ChEBI" id="CHEBI:29033"/>
    </cofactor>
</comment>
<comment type="subunit">
    <text evidence="1 2 5 6">Homodimer; homodimerization is essential for catalytic activity. Interacts with VHL and HIF1A. Part of a complex with VHL, HIF1A and HDAC1 or HDAC2 or HDAC3. Interacts with NFKB1 and NFKBIA. Interacts with NOTCH1, NOTCH2 and NOTCH3 but not with NOTCH4. Interacts with ABPA3. Interacts with TNKS2. Interacts with PPP1R12A (By similarity). Interacts with UBE3A (By similarity). Interacts with ASB4. Interacts with ANKS3 (PubMed:25671767). Interacts with NECAB3; the interaction is indirect and seems to be mediated by APBA3 (By similarity).</text>
</comment>
<comment type="subcellular location">
    <subcellularLocation>
        <location evidence="2">Nucleus</location>
    </subcellularLocation>
    <subcellularLocation>
        <location evidence="2">Cytoplasm</location>
    </subcellularLocation>
    <subcellularLocation>
        <location evidence="2">Cytoplasm</location>
        <location evidence="2">Perinuclear region</location>
    </subcellularLocation>
</comment>
<comment type="alternative products">
    <event type="alternative splicing"/>
    <isoform>
        <id>Q8BLR9-1</id>
        <name>1</name>
        <sequence type="displayed"/>
    </isoform>
    <isoform>
        <id>Q8BLR9-2</id>
        <name>2</name>
        <sequence type="described" ref="VSP_017537 VSP_017538"/>
    </isoform>
</comment>
<proteinExistence type="evidence at protein level"/>